<keyword id="KW-1185">Reference proteome</keyword>
<keyword id="KW-0687">Ribonucleoprotein</keyword>
<keyword id="KW-0689">Ribosomal protein</keyword>
<keyword id="KW-0694">RNA-binding</keyword>
<keyword id="KW-0699">rRNA-binding</keyword>
<evidence type="ECO:0000255" key="1">
    <source>
        <dbReference type="HAMAP-Rule" id="MF_01343"/>
    </source>
</evidence>
<evidence type="ECO:0000256" key="2">
    <source>
        <dbReference type="SAM" id="MobiDB-lite"/>
    </source>
</evidence>
<evidence type="ECO:0000305" key="3"/>
<dbReference type="EMBL" id="BX294143">
    <property type="protein sequence ID" value="CAD74443.1"/>
    <property type="molecule type" value="Genomic_DNA"/>
</dbReference>
<dbReference type="RefSeq" id="NP_866902.1">
    <property type="nucleotide sequence ID" value="NC_005027.1"/>
</dbReference>
<dbReference type="RefSeq" id="WP_007329975.1">
    <property type="nucleotide sequence ID" value="NC_005027.1"/>
</dbReference>
<dbReference type="SMR" id="Q7UR97"/>
<dbReference type="FunCoup" id="Q7UR97">
    <property type="interactions" value="462"/>
</dbReference>
<dbReference type="STRING" id="243090.RB5801"/>
<dbReference type="EnsemblBacteria" id="CAD74443">
    <property type="protein sequence ID" value="CAD74443"/>
    <property type="gene ID" value="RB5801"/>
</dbReference>
<dbReference type="KEGG" id="rba:RB5801"/>
<dbReference type="PATRIC" id="fig|243090.15.peg.2793"/>
<dbReference type="eggNOG" id="COG0184">
    <property type="taxonomic scope" value="Bacteria"/>
</dbReference>
<dbReference type="HOGENOM" id="CLU_148518_0_0_0"/>
<dbReference type="InParanoid" id="Q7UR97"/>
<dbReference type="OrthoDB" id="9799262at2"/>
<dbReference type="Proteomes" id="UP000001025">
    <property type="component" value="Chromosome"/>
</dbReference>
<dbReference type="GO" id="GO:0022627">
    <property type="term" value="C:cytosolic small ribosomal subunit"/>
    <property type="evidence" value="ECO:0000318"/>
    <property type="project" value="GO_Central"/>
</dbReference>
<dbReference type="GO" id="GO:0019843">
    <property type="term" value="F:rRNA binding"/>
    <property type="evidence" value="ECO:0007669"/>
    <property type="project" value="UniProtKB-UniRule"/>
</dbReference>
<dbReference type="GO" id="GO:0003735">
    <property type="term" value="F:structural constituent of ribosome"/>
    <property type="evidence" value="ECO:0007669"/>
    <property type="project" value="InterPro"/>
</dbReference>
<dbReference type="GO" id="GO:0006412">
    <property type="term" value="P:translation"/>
    <property type="evidence" value="ECO:0007669"/>
    <property type="project" value="UniProtKB-UniRule"/>
</dbReference>
<dbReference type="CDD" id="cd00353">
    <property type="entry name" value="Ribosomal_S15p_S13e"/>
    <property type="match status" value="1"/>
</dbReference>
<dbReference type="FunFam" id="1.10.287.10:FF:000002">
    <property type="entry name" value="30S ribosomal protein S15"/>
    <property type="match status" value="1"/>
</dbReference>
<dbReference type="Gene3D" id="6.10.250.3130">
    <property type="match status" value="1"/>
</dbReference>
<dbReference type="Gene3D" id="1.10.287.10">
    <property type="entry name" value="S15/NS1, RNA-binding"/>
    <property type="match status" value="1"/>
</dbReference>
<dbReference type="HAMAP" id="MF_01343_B">
    <property type="entry name" value="Ribosomal_uS15_B"/>
    <property type="match status" value="1"/>
</dbReference>
<dbReference type="InterPro" id="IPR000589">
    <property type="entry name" value="Ribosomal_uS15"/>
</dbReference>
<dbReference type="InterPro" id="IPR005290">
    <property type="entry name" value="Ribosomal_uS15_bac-type"/>
</dbReference>
<dbReference type="InterPro" id="IPR009068">
    <property type="entry name" value="uS15_NS1_RNA-bd_sf"/>
</dbReference>
<dbReference type="NCBIfam" id="TIGR00952">
    <property type="entry name" value="S15_bact"/>
    <property type="match status" value="1"/>
</dbReference>
<dbReference type="PANTHER" id="PTHR23321">
    <property type="entry name" value="RIBOSOMAL PROTEIN S15, BACTERIAL AND ORGANELLAR"/>
    <property type="match status" value="1"/>
</dbReference>
<dbReference type="PANTHER" id="PTHR23321:SF26">
    <property type="entry name" value="SMALL RIBOSOMAL SUBUNIT PROTEIN US15M"/>
    <property type="match status" value="1"/>
</dbReference>
<dbReference type="Pfam" id="PF00312">
    <property type="entry name" value="Ribosomal_S15"/>
    <property type="match status" value="1"/>
</dbReference>
<dbReference type="SMART" id="SM01387">
    <property type="entry name" value="Ribosomal_S15"/>
    <property type="match status" value="1"/>
</dbReference>
<dbReference type="SUPFAM" id="SSF47060">
    <property type="entry name" value="S15/NS1 RNA-binding domain"/>
    <property type="match status" value="1"/>
</dbReference>
<dbReference type="PROSITE" id="PS00362">
    <property type="entry name" value="RIBOSOMAL_S15"/>
    <property type="match status" value="1"/>
</dbReference>
<reference key="1">
    <citation type="journal article" date="2003" name="Proc. Natl. Acad. Sci. U.S.A.">
        <title>Complete genome sequence of the marine planctomycete Pirellula sp. strain 1.</title>
        <authorList>
            <person name="Gloeckner F.O."/>
            <person name="Kube M."/>
            <person name="Bauer M."/>
            <person name="Teeling H."/>
            <person name="Lombardot T."/>
            <person name="Ludwig W."/>
            <person name="Gade D."/>
            <person name="Beck A."/>
            <person name="Borzym K."/>
            <person name="Heitmann K."/>
            <person name="Rabus R."/>
            <person name="Schlesner H."/>
            <person name="Amann R."/>
            <person name="Reinhardt R."/>
        </authorList>
    </citation>
    <scope>NUCLEOTIDE SEQUENCE [LARGE SCALE GENOMIC DNA]</scope>
    <source>
        <strain>DSM 10527 / NCIMB 13988 / SH1</strain>
    </source>
</reference>
<proteinExistence type="inferred from homology"/>
<sequence length="89" mass="10155">MTISKERKEEVISEHGAAAGDTGSPEVQIAILTERINGLTEHMRTHRKDYASRRGLLGLVSRRRRLLDYVRGQDPQRYLDIIGKLGIRK</sequence>
<feature type="chain" id="PRO_0000115523" description="Small ribosomal subunit protein uS15">
    <location>
        <begin position="1"/>
        <end position="89"/>
    </location>
</feature>
<feature type="region of interest" description="Disordered" evidence="2">
    <location>
        <begin position="1"/>
        <end position="24"/>
    </location>
</feature>
<feature type="compositionally biased region" description="Basic and acidic residues" evidence="2">
    <location>
        <begin position="1"/>
        <end position="13"/>
    </location>
</feature>
<name>RS15_RHOBA</name>
<protein>
    <recommendedName>
        <fullName evidence="1">Small ribosomal subunit protein uS15</fullName>
    </recommendedName>
    <alternativeName>
        <fullName evidence="3">30S ribosomal protein S15</fullName>
    </alternativeName>
</protein>
<accession>Q7UR97</accession>
<gene>
    <name evidence="1" type="primary">rpsO</name>
    <name type="ordered locus">RB5801</name>
</gene>
<organism>
    <name type="scientific">Rhodopirellula baltica (strain DSM 10527 / NCIMB 13988 / SH1)</name>
    <dbReference type="NCBI Taxonomy" id="243090"/>
    <lineage>
        <taxon>Bacteria</taxon>
        <taxon>Pseudomonadati</taxon>
        <taxon>Planctomycetota</taxon>
        <taxon>Planctomycetia</taxon>
        <taxon>Pirellulales</taxon>
        <taxon>Pirellulaceae</taxon>
        <taxon>Rhodopirellula</taxon>
    </lineage>
</organism>
<comment type="function">
    <text evidence="1">One of the primary rRNA binding proteins, it binds directly to 16S rRNA where it helps nucleate assembly of the platform of the 30S subunit by binding and bridging several RNA helices of the 16S rRNA.</text>
</comment>
<comment type="function">
    <text evidence="1">Forms an intersubunit bridge (bridge B4) with the 23S rRNA of the 50S subunit in the ribosome.</text>
</comment>
<comment type="subunit">
    <text evidence="1">Part of the 30S ribosomal subunit. Forms a bridge to the 50S subunit in the 70S ribosome, contacting the 23S rRNA.</text>
</comment>
<comment type="similarity">
    <text evidence="1">Belongs to the universal ribosomal protein uS15 family.</text>
</comment>